<accession>Q9LLC1</accession>
<accession>Q9LF29</accession>
<sequence length="255" mass="27280">MASLSVPCVKICALNRRVGSLPGISTQRWQPQPNGISFPSDVSQNHSAFWRLRATTNEVVSNSTPMTNGGYMNGKAKTNVPEPAELSEFMAKVSGLLKLVDSKDIVELELKQLDCEIVIRKKEALQQAVPPAPVYHSMPPVMADFSMPPAQPVALPPSPTPTSTPATAKPTSAPSSSHPPLKSPMAGTFYRSPGPGEPPFVKVGDKVQKGQIVCIIEAMKLMNEIEAEKSGTIMELLAEDGKPVSVDTPLFVIAP</sequence>
<proteinExistence type="evidence at protein level"/>
<keyword id="KW-0092">Biotin</keyword>
<keyword id="KW-0150">Chloroplast</keyword>
<keyword id="KW-0275">Fatty acid biosynthesis</keyword>
<keyword id="KW-0276">Fatty acid metabolism</keyword>
<keyword id="KW-0444">Lipid biosynthesis</keyword>
<keyword id="KW-0443">Lipid metabolism</keyword>
<keyword id="KW-0934">Plastid</keyword>
<keyword id="KW-1185">Reference proteome</keyword>
<keyword id="KW-0809">Transit peptide</keyword>
<name>BCCP2_ARATH</name>
<feature type="transit peptide" description="Chloroplast" evidence="2">
    <location>
        <begin position="1"/>
        <end position="87"/>
    </location>
</feature>
<feature type="chain" id="PRO_0000295893" description="Biotin carboxyl carrier protein of acetyl-CoA carboxylase 2, chloroplastic">
    <location>
        <begin position="88"/>
        <end position="255"/>
    </location>
</feature>
<feature type="domain" description="Biotinyl-binding" evidence="3">
    <location>
        <begin position="178"/>
        <end position="254"/>
    </location>
</feature>
<feature type="region of interest" description="Disordered" evidence="4">
    <location>
        <begin position="148"/>
        <end position="193"/>
    </location>
</feature>
<feature type="compositionally biased region" description="Pro residues" evidence="4">
    <location>
        <begin position="149"/>
        <end position="162"/>
    </location>
</feature>
<feature type="compositionally biased region" description="Low complexity" evidence="4">
    <location>
        <begin position="163"/>
        <end position="180"/>
    </location>
</feature>
<feature type="modified residue" description="N6-biotinyllysine" evidence="1 3">
    <location>
        <position position="220"/>
    </location>
</feature>
<reference key="1">
    <citation type="journal article" date="2001" name="Plant Physiol.">
        <title>Brassicaceae express multiple isoforms of biotin carboxyl carrier protein in a tissue-specific manner.</title>
        <authorList>
            <person name="Thelen J.J."/>
            <person name="Mekhedov S."/>
            <person name="Ohlrogge J.B."/>
        </authorList>
    </citation>
    <scope>NUCLEOTIDE SEQUENCE [MRNA]</scope>
    <scope>SUBCELLULAR LOCATION</scope>
    <scope>TISSUE SPECIFICITY</scope>
</reference>
<reference key="2">
    <citation type="journal article" date="2000" name="Nature">
        <title>Sequence and analysis of chromosome 5 of the plant Arabidopsis thaliana.</title>
        <authorList>
            <person name="Tabata S."/>
            <person name="Kaneko T."/>
            <person name="Nakamura Y."/>
            <person name="Kotani H."/>
            <person name="Kato T."/>
            <person name="Asamizu E."/>
            <person name="Miyajima N."/>
            <person name="Sasamoto S."/>
            <person name="Kimura T."/>
            <person name="Hosouchi T."/>
            <person name="Kawashima K."/>
            <person name="Kohara M."/>
            <person name="Matsumoto M."/>
            <person name="Matsuno A."/>
            <person name="Muraki A."/>
            <person name="Nakayama S."/>
            <person name="Nakazaki N."/>
            <person name="Naruo K."/>
            <person name="Okumura S."/>
            <person name="Shinpo S."/>
            <person name="Takeuchi C."/>
            <person name="Wada T."/>
            <person name="Watanabe A."/>
            <person name="Yamada M."/>
            <person name="Yasuda M."/>
            <person name="Sato S."/>
            <person name="de la Bastide M."/>
            <person name="Huang E."/>
            <person name="Spiegel L."/>
            <person name="Gnoj L."/>
            <person name="O'Shaughnessy A."/>
            <person name="Preston R."/>
            <person name="Habermann K."/>
            <person name="Murray J."/>
            <person name="Johnson D."/>
            <person name="Rohlfing T."/>
            <person name="Nelson J."/>
            <person name="Stoneking T."/>
            <person name="Pepin K."/>
            <person name="Spieth J."/>
            <person name="Sekhon M."/>
            <person name="Armstrong J."/>
            <person name="Becker M."/>
            <person name="Belter E."/>
            <person name="Cordum H."/>
            <person name="Cordes M."/>
            <person name="Courtney L."/>
            <person name="Courtney W."/>
            <person name="Dante M."/>
            <person name="Du H."/>
            <person name="Edwards J."/>
            <person name="Fryman J."/>
            <person name="Haakensen B."/>
            <person name="Lamar E."/>
            <person name="Latreille P."/>
            <person name="Leonard S."/>
            <person name="Meyer R."/>
            <person name="Mulvaney E."/>
            <person name="Ozersky P."/>
            <person name="Riley A."/>
            <person name="Strowmatt C."/>
            <person name="Wagner-McPherson C."/>
            <person name="Wollam A."/>
            <person name="Yoakum M."/>
            <person name="Bell M."/>
            <person name="Dedhia N."/>
            <person name="Parnell L."/>
            <person name="Shah R."/>
            <person name="Rodriguez M."/>
            <person name="Hoon See L."/>
            <person name="Vil D."/>
            <person name="Baker J."/>
            <person name="Kirchoff K."/>
            <person name="Toth K."/>
            <person name="King L."/>
            <person name="Bahret A."/>
            <person name="Miller B."/>
            <person name="Marra M.A."/>
            <person name="Martienssen R."/>
            <person name="McCombie W.R."/>
            <person name="Wilson R.K."/>
            <person name="Murphy G."/>
            <person name="Bancroft I."/>
            <person name="Volckaert G."/>
            <person name="Wambutt R."/>
            <person name="Duesterhoeft A."/>
            <person name="Stiekema W."/>
            <person name="Pohl T."/>
            <person name="Entian K.-D."/>
            <person name="Terryn N."/>
            <person name="Hartley N."/>
            <person name="Bent E."/>
            <person name="Johnson S."/>
            <person name="Langham S.-A."/>
            <person name="McCullagh B."/>
            <person name="Robben J."/>
            <person name="Grymonprez B."/>
            <person name="Zimmermann W."/>
            <person name="Ramsperger U."/>
            <person name="Wedler H."/>
            <person name="Balke K."/>
            <person name="Wedler E."/>
            <person name="Peters S."/>
            <person name="van Staveren M."/>
            <person name="Dirkse W."/>
            <person name="Mooijman P."/>
            <person name="Klein Lankhorst R."/>
            <person name="Weitzenegger T."/>
            <person name="Bothe G."/>
            <person name="Rose M."/>
            <person name="Hauf J."/>
            <person name="Berneiser S."/>
            <person name="Hempel S."/>
            <person name="Feldpausch M."/>
            <person name="Lamberth S."/>
            <person name="Villarroel R."/>
            <person name="Gielen J."/>
            <person name="Ardiles W."/>
            <person name="Bents O."/>
            <person name="Lemcke K."/>
            <person name="Kolesov G."/>
            <person name="Mayer K.F.X."/>
            <person name="Rudd S."/>
            <person name="Schoof H."/>
            <person name="Schueller C."/>
            <person name="Zaccaria P."/>
            <person name="Mewes H.-W."/>
            <person name="Bevan M."/>
            <person name="Fransz P.F."/>
        </authorList>
    </citation>
    <scope>NUCLEOTIDE SEQUENCE [LARGE SCALE GENOMIC DNA]</scope>
    <source>
        <strain>cv. Columbia</strain>
    </source>
</reference>
<reference key="3">
    <citation type="journal article" date="2017" name="Plant J.">
        <title>Araport11: a complete reannotation of the Arabidopsis thaliana reference genome.</title>
        <authorList>
            <person name="Cheng C.Y."/>
            <person name="Krishnakumar V."/>
            <person name="Chan A.P."/>
            <person name="Thibaud-Nissen F."/>
            <person name="Schobel S."/>
            <person name="Town C.D."/>
        </authorList>
    </citation>
    <scope>GENOME REANNOTATION</scope>
    <source>
        <strain>cv. Columbia</strain>
    </source>
</reference>
<reference key="4">
    <citation type="submission" date="2002-03" db="EMBL/GenBank/DDBJ databases">
        <title>Full-length cDNA from Arabidopsis thaliana.</title>
        <authorList>
            <person name="Brover V.V."/>
            <person name="Troukhan M.E."/>
            <person name="Alexandrov N.A."/>
            <person name="Lu Y.-P."/>
            <person name="Flavell R.B."/>
            <person name="Feldmann K.A."/>
        </authorList>
    </citation>
    <scope>NUCLEOTIDE SEQUENCE [LARGE SCALE MRNA]</scope>
</reference>
<reference key="5">
    <citation type="submission" date="2006-09" db="EMBL/GenBank/DDBJ databases">
        <title>Arabidopsis ORF clones.</title>
        <authorList>
            <person name="Bautista V.R."/>
            <person name="Kim C.J."/>
            <person name="Chen H."/>
            <person name="Quinitio C."/>
            <person name="Ecker J.R."/>
        </authorList>
    </citation>
    <scope>NUCLEOTIDE SEQUENCE [LARGE SCALE MRNA]</scope>
    <source>
        <strain>cv. Columbia</strain>
    </source>
</reference>
<comment type="function">
    <text>This protein is a component of the acetyl coenzyme A carboxylase complex; first, biotin carboxylase catalyzes the carboxylation of the carrier protein and then the transcarboxylase transfers the carboxyl group to form malonyl-CoA.</text>
</comment>
<comment type="pathway">
    <text>Lipid metabolism; fatty acid biosynthesis.</text>
</comment>
<comment type="subunit">
    <text>Acetyl-CoA carboxylase is a heterohexamer composed of biotin carboxyl carrier protein, biotin carboxylase and 2 subunits each of ACCase subunit alpha and ACCase plastid-coded subunit beta (accD).</text>
</comment>
<comment type="interaction">
    <interactant intactId="EBI-15823091">
        <id>Q9LLC1</id>
    </interactant>
    <interactant intactId="EBI-701245">
        <id>Q9ZST4</id>
        <label>GLB1</label>
    </interactant>
    <organismsDiffer>false</organismsDiffer>
    <experiments>2</experiments>
</comment>
<comment type="subcellular location">
    <subcellularLocation>
        <location evidence="5">Plastid</location>
        <location evidence="5">Chloroplast</location>
    </subcellularLocation>
</comment>
<comment type="tissue specificity">
    <text evidence="5">Primarily expressed in 7 to 10 days after flowering seeds at levels approximately 2-fold less abundant than BCCP1.</text>
</comment>
<comment type="sequence caution" evidence="6">
    <conflict type="erroneous gene model prediction">
        <sequence resource="EMBL-CDS" id="CAC01752"/>
    </conflict>
</comment>
<organism>
    <name type="scientific">Arabidopsis thaliana</name>
    <name type="common">Mouse-ear cress</name>
    <dbReference type="NCBI Taxonomy" id="3702"/>
    <lineage>
        <taxon>Eukaryota</taxon>
        <taxon>Viridiplantae</taxon>
        <taxon>Streptophyta</taxon>
        <taxon>Embryophyta</taxon>
        <taxon>Tracheophyta</taxon>
        <taxon>Spermatophyta</taxon>
        <taxon>Magnoliopsida</taxon>
        <taxon>eudicotyledons</taxon>
        <taxon>Gunneridae</taxon>
        <taxon>Pentapetalae</taxon>
        <taxon>rosids</taxon>
        <taxon>malvids</taxon>
        <taxon>Brassicales</taxon>
        <taxon>Brassicaceae</taxon>
        <taxon>Camelineae</taxon>
        <taxon>Arabidopsis</taxon>
    </lineage>
</organism>
<dbReference type="EMBL" id="AF223948">
    <property type="protein sequence ID" value="AAF80592.1"/>
    <property type="molecule type" value="mRNA"/>
</dbReference>
<dbReference type="EMBL" id="AL391143">
    <property type="protein sequence ID" value="CAC01752.1"/>
    <property type="status" value="ALT_SEQ"/>
    <property type="molecule type" value="Genomic_DNA"/>
</dbReference>
<dbReference type="EMBL" id="CP002688">
    <property type="protein sequence ID" value="AED92173.1"/>
    <property type="molecule type" value="Genomic_DNA"/>
</dbReference>
<dbReference type="EMBL" id="AY086528">
    <property type="protein sequence ID" value="AAM63527.1"/>
    <property type="molecule type" value="mRNA"/>
</dbReference>
<dbReference type="EMBL" id="BT028902">
    <property type="protein sequence ID" value="ABI49449.1"/>
    <property type="molecule type" value="mRNA"/>
</dbReference>
<dbReference type="PIR" id="T51531">
    <property type="entry name" value="T51531"/>
</dbReference>
<dbReference type="RefSeq" id="NP_568316.1">
    <property type="nucleotide sequence ID" value="NM_121557.4"/>
</dbReference>
<dbReference type="SMR" id="Q9LLC1"/>
<dbReference type="DIP" id="DIP-58513N"/>
<dbReference type="FunCoup" id="Q9LLC1">
    <property type="interactions" value="366"/>
</dbReference>
<dbReference type="IntAct" id="Q9LLC1">
    <property type="interactions" value="1"/>
</dbReference>
<dbReference type="STRING" id="3702.Q9LLC1"/>
<dbReference type="GlyGen" id="Q9LLC1">
    <property type="glycosylation" value="2 sites"/>
</dbReference>
<dbReference type="PaxDb" id="3702-AT5G15530.1"/>
<dbReference type="ProteomicsDB" id="240650"/>
<dbReference type="EnsemblPlants" id="AT5G15530.1">
    <property type="protein sequence ID" value="AT5G15530.1"/>
    <property type="gene ID" value="AT5G15530"/>
</dbReference>
<dbReference type="GeneID" id="831406"/>
<dbReference type="Gramene" id="AT5G15530.1">
    <property type="protein sequence ID" value="AT5G15530.1"/>
    <property type="gene ID" value="AT5G15530"/>
</dbReference>
<dbReference type="KEGG" id="ath:AT5G15530"/>
<dbReference type="Araport" id="AT5G15530"/>
<dbReference type="TAIR" id="AT5G15530">
    <property type="gene designation" value="BCCP2"/>
</dbReference>
<dbReference type="eggNOG" id="ENOG502QUI2">
    <property type="taxonomic scope" value="Eukaryota"/>
</dbReference>
<dbReference type="HOGENOM" id="CLU_016733_1_0_1"/>
<dbReference type="InParanoid" id="Q9LLC1"/>
<dbReference type="OMA" id="WQPQPNG"/>
<dbReference type="OrthoDB" id="196847at2759"/>
<dbReference type="PhylomeDB" id="Q9LLC1"/>
<dbReference type="UniPathway" id="UPA00094"/>
<dbReference type="PRO" id="PR:Q9LLC1"/>
<dbReference type="Proteomes" id="UP000006548">
    <property type="component" value="Chromosome 5"/>
</dbReference>
<dbReference type="ExpressionAtlas" id="Q9LLC1">
    <property type="expression patterns" value="baseline and differential"/>
</dbReference>
<dbReference type="GO" id="GO:0009317">
    <property type="term" value="C:acetyl-CoA carboxylase complex"/>
    <property type="evidence" value="ECO:0007669"/>
    <property type="project" value="InterPro"/>
</dbReference>
<dbReference type="GO" id="GO:0009941">
    <property type="term" value="C:chloroplast envelope"/>
    <property type="evidence" value="ECO:0007005"/>
    <property type="project" value="TAIR"/>
</dbReference>
<dbReference type="GO" id="GO:0009570">
    <property type="term" value="C:chloroplast stroma"/>
    <property type="evidence" value="ECO:0007005"/>
    <property type="project" value="TAIR"/>
</dbReference>
<dbReference type="GO" id="GO:0003989">
    <property type="term" value="F:acetyl-CoA carboxylase activity"/>
    <property type="evidence" value="ECO:0007669"/>
    <property type="project" value="InterPro"/>
</dbReference>
<dbReference type="GO" id="GO:0006633">
    <property type="term" value="P:fatty acid biosynthetic process"/>
    <property type="evidence" value="ECO:0007669"/>
    <property type="project" value="UniProtKB-UniPathway"/>
</dbReference>
<dbReference type="CDD" id="cd06850">
    <property type="entry name" value="biotinyl_domain"/>
    <property type="match status" value="1"/>
</dbReference>
<dbReference type="FunFam" id="2.40.50.100:FF:000003">
    <property type="entry name" value="Acetyl-CoA carboxylase biotin carboxyl carrier protein"/>
    <property type="match status" value="1"/>
</dbReference>
<dbReference type="Gene3D" id="2.40.50.100">
    <property type="match status" value="1"/>
</dbReference>
<dbReference type="InterPro" id="IPR050537">
    <property type="entry name" value="2-oxoacid_dehydrogenase"/>
</dbReference>
<dbReference type="InterPro" id="IPR001249">
    <property type="entry name" value="AcCoA_biotinCC"/>
</dbReference>
<dbReference type="InterPro" id="IPR001882">
    <property type="entry name" value="Biotin_BS"/>
</dbReference>
<dbReference type="InterPro" id="IPR000089">
    <property type="entry name" value="Biotin_lipoyl"/>
</dbReference>
<dbReference type="InterPro" id="IPR011053">
    <property type="entry name" value="Single_hybrid_motif"/>
</dbReference>
<dbReference type="NCBIfam" id="TIGR00531">
    <property type="entry name" value="BCCP"/>
    <property type="match status" value="1"/>
</dbReference>
<dbReference type="PANTHER" id="PTHR43416:SF4">
    <property type="entry name" value="BIOTIN CARBOXYL CARRIER PROTEIN OF ACETYL-COA CARBOXYLASE 2, CHLOROPLASTIC"/>
    <property type="match status" value="1"/>
</dbReference>
<dbReference type="PANTHER" id="PTHR43416">
    <property type="entry name" value="DIHYDROLIPOYLLYSINE-RESIDUE SUCCINYLTRANSFERASE COMPONENT OF 2-OXOGLUTARATE DEHYDROGENASE COMPLEX, MITOCHONDRIAL-RELATED"/>
    <property type="match status" value="1"/>
</dbReference>
<dbReference type="Pfam" id="PF00364">
    <property type="entry name" value="Biotin_lipoyl"/>
    <property type="match status" value="1"/>
</dbReference>
<dbReference type="PRINTS" id="PR01071">
    <property type="entry name" value="ACOABIOTINCC"/>
</dbReference>
<dbReference type="SUPFAM" id="SSF51230">
    <property type="entry name" value="Single hybrid motif"/>
    <property type="match status" value="1"/>
</dbReference>
<dbReference type="PROSITE" id="PS00188">
    <property type="entry name" value="BIOTIN"/>
    <property type="match status" value="1"/>
</dbReference>
<dbReference type="PROSITE" id="PS50968">
    <property type="entry name" value="BIOTINYL_LIPOYL"/>
    <property type="match status" value="1"/>
</dbReference>
<protein>
    <recommendedName>
        <fullName>Biotin carboxyl carrier protein of acetyl-CoA carboxylase 2, chloroplastic</fullName>
        <shortName>AtBCCP2</shortName>
        <shortName>BCCP-2</shortName>
    </recommendedName>
</protein>
<gene>
    <name type="primary">BCCP2</name>
    <name type="ordered locus">At5g15530</name>
    <name type="ORF">T20K14_140</name>
</gene>
<evidence type="ECO:0000250" key="1"/>
<evidence type="ECO:0000255" key="2"/>
<evidence type="ECO:0000255" key="3">
    <source>
        <dbReference type="PROSITE-ProRule" id="PRU01066"/>
    </source>
</evidence>
<evidence type="ECO:0000256" key="4">
    <source>
        <dbReference type="SAM" id="MobiDB-lite"/>
    </source>
</evidence>
<evidence type="ECO:0000269" key="5">
    <source>
    </source>
</evidence>
<evidence type="ECO:0000305" key="6"/>